<protein>
    <recommendedName>
        <fullName>Uncharacterized protein 110</fullName>
    </recommendedName>
</protein>
<organism>
    <name type="scientific">Sulfolobus islandicus rod-shaped virus 1</name>
    <name type="common">SIRV-1</name>
    <name type="synonym">Sulfolobus virus SIRV-1</name>
    <dbReference type="NCBI Taxonomy" id="157898"/>
    <lineage>
        <taxon>Viruses</taxon>
        <taxon>Adnaviria</taxon>
        <taxon>Zilligvirae</taxon>
        <taxon>Taleaviricota</taxon>
        <taxon>Tokiviricetes</taxon>
        <taxon>Ligamenvirales</taxon>
        <taxon>Rudiviridae</taxon>
        <taxon>Icerudivirus</taxon>
        <taxon>Icerudivirus SIRV1</taxon>
    </lineage>
</organism>
<gene>
    <name type="ORF">110</name>
</gene>
<sequence length="110" mass="13036">MRIEDPFQNIFGVVRIAIDKIKELEQRGQIYGLSRFLPNSIIVMKTIDYPLIVDLYIPGFTFYFQFSIIQDQQTKQIFIDDFRVVYPQPYAKQINSTANFELSEEENEDE</sequence>
<accession>Q8QL31</accession>
<accession>Q5TJ95</accession>
<dbReference type="EMBL" id="AJ414696">
    <property type="protein sequence ID" value="CAC93979.1"/>
    <property type="molecule type" value="Genomic_DNA"/>
</dbReference>
<dbReference type="EMBL" id="AJ748296">
    <property type="protein sequence ID" value="CAG38843.1"/>
    <property type="molecule type" value="Genomic_DNA"/>
</dbReference>
<dbReference type="RefSeq" id="NP_666612.1">
    <property type="nucleotide sequence ID" value="NC_004087.1"/>
</dbReference>
<dbReference type="KEGG" id="vg:951370"/>
<dbReference type="OrthoDB" id="17130at10239"/>
<dbReference type="Proteomes" id="UP000002270">
    <property type="component" value="Genome"/>
</dbReference>
<dbReference type="Proteomes" id="UP000223181">
    <property type="component" value="Segment"/>
</dbReference>
<reference key="1">
    <citation type="journal article" date="2001" name="Virology">
        <title>Sequences and replication of genomes of the archaeal rudiviruses SIRV1 and SIRV2: relationships to the archaeal lipothrixvirus SIFV and some eukaryal viruses.</title>
        <authorList>
            <person name="Peng X."/>
            <person name="Blum H."/>
            <person name="She Q."/>
            <person name="Mallok S."/>
            <person name="Bruegger K."/>
            <person name="Garrett R.A."/>
            <person name="Zillig W."/>
            <person name="Prangishvili D."/>
        </authorList>
    </citation>
    <scope>NUCLEOTIDE SEQUENCE [LARGE SCALE GENOMIC DNA]</scope>
    <source>
        <strain>Isolate variant VIII</strain>
    </source>
</reference>
<reference key="2">
    <citation type="journal article" date="2004" name="Mol. Microbiol.">
        <title>Multiple variants of the archaeal DNA rudivirus SIRV1 in a single host and a novel mechanism of genomic variation.</title>
        <authorList>
            <person name="Peng X."/>
            <person name="Kessler A."/>
            <person name="Phan H."/>
            <person name="Garrett R.A."/>
            <person name="Prangishvili D."/>
        </authorList>
    </citation>
    <scope>NUCLEOTIDE SEQUENCE [LARGE SCALE GENOMIC DNA]</scope>
    <source>
        <strain>Isolate variant XX</strain>
    </source>
</reference>
<name>Y110_SIRV1</name>
<feature type="chain" id="PRO_0000342311" description="Uncharacterized protein 110">
    <location>
        <begin position="1"/>
        <end position="110"/>
    </location>
</feature>
<keyword id="KW-1185">Reference proteome</keyword>
<proteinExistence type="predicted"/>
<organismHost>
    <name type="scientific">Saccharolobus islandicus</name>
    <name type="common">Sulfolobus islandicus</name>
    <dbReference type="NCBI Taxonomy" id="43080"/>
</organismHost>